<comment type="function">
    <text evidence="1">Produces ATP from ADP in the presence of a proton gradient across the membrane. The gamma chain is believed to be important in regulating ATPase activity and the flow of protons through the CF(0) complex.</text>
</comment>
<comment type="subunit">
    <text evidence="1">F-type ATPases have 2 components, CF(1) - the catalytic core - and CF(0) - the membrane proton channel. CF(1) has five subunits: alpha(3), beta(3), gamma(1), delta(1), epsilon(1). CF(0) has three main subunits: a, b and c.</text>
</comment>
<comment type="subcellular location">
    <subcellularLocation>
        <location evidence="1">Cell inner membrane</location>
        <topology evidence="1">Peripheral membrane protein</topology>
    </subcellularLocation>
</comment>
<comment type="similarity">
    <text evidence="1">Belongs to the ATPase gamma chain family.</text>
</comment>
<accession>Q7UFB6</accession>
<gene>
    <name evidence="1" type="primary">atpG</name>
    <name type="ordered locus">RB10216</name>
</gene>
<dbReference type="EMBL" id="BX294151">
    <property type="protein sequence ID" value="CAD78767.1"/>
    <property type="molecule type" value="Genomic_DNA"/>
</dbReference>
<dbReference type="RefSeq" id="NP_869310.1">
    <property type="nucleotide sequence ID" value="NC_005027.1"/>
</dbReference>
<dbReference type="RefSeq" id="WP_011122671.1">
    <property type="nucleotide sequence ID" value="NC_005027.1"/>
</dbReference>
<dbReference type="SMR" id="Q7UFB6"/>
<dbReference type="FunCoup" id="Q7UFB6">
    <property type="interactions" value="392"/>
</dbReference>
<dbReference type="STRING" id="243090.RB10216"/>
<dbReference type="EnsemblBacteria" id="CAD78767">
    <property type="protein sequence ID" value="CAD78767"/>
    <property type="gene ID" value="RB10216"/>
</dbReference>
<dbReference type="KEGG" id="rba:RB10216"/>
<dbReference type="PATRIC" id="fig|243090.15.peg.4932"/>
<dbReference type="eggNOG" id="COG0224">
    <property type="taxonomic scope" value="Bacteria"/>
</dbReference>
<dbReference type="HOGENOM" id="CLU_050669_0_0_0"/>
<dbReference type="InParanoid" id="Q7UFB6"/>
<dbReference type="OrthoDB" id="9812769at2"/>
<dbReference type="Proteomes" id="UP000001025">
    <property type="component" value="Chromosome"/>
</dbReference>
<dbReference type="GO" id="GO:0005886">
    <property type="term" value="C:plasma membrane"/>
    <property type="evidence" value="ECO:0007669"/>
    <property type="project" value="UniProtKB-SubCell"/>
</dbReference>
<dbReference type="GO" id="GO:0045259">
    <property type="term" value="C:proton-transporting ATP synthase complex"/>
    <property type="evidence" value="ECO:0007669"/>
    <property type="project" value="UniProtKB-KW"/>
</dbReference>
<dbReference type="GO" id="GO:0005524">
    <property type="term" value="F:ATP binding"/>
    <property type="evidence" value="ECO:0007669"/>
    <property type="project" value="UniProtKB-UniRule"/>
</dbReference>
<dbReference type="GO" id="GO:0046933">
    <property type="term" value="F:proton-transporting ATP synthase activity, rotational mechanism"/>
    <property type="evidence" value="ECO:0007669"/>
    <property type="project" value="UniProtKB-UniRule"/>
</dbReference>
<dbReference type="GO" id="GO:0015986">
    <property type="term" value="P:proton motive force-driven ATP synthesis"/>
    <property type="evidence" value="ECO:0000318"/>
    <property type="project" value="GO_Central"/>
</dbReference>
<dbReference type="GO" id="GO:0042777">
    <property type="term" value="P:proton motive force-driven plasma membrane ATP synthesis"/>
    <property type="evidence" value="ECO:0007669"/>
    <property type="project" value="UniProtKB-UniRule"/>
</dbReference>
<dbReference type="CDD" id="cd12151">
    <property type="entry name" value="F1-ATPase_gamma"/>
    <property type="match status" value="1"/>
</dbReference>
<dbReference type="Gene3D" id="3.40.1380.10">
    <property type="match status" value="1"/>
</dbReference>
<dbReference type="Gene3D" id="1.10.287.80">
    <property type="entry name" value="ATP synthase, gamma subunit, helix hairpin domain"/>
    <property type="match status" value="1"/>
</dbReference>
<dbReference type="HAMAP" id="MF_00815">
    <property type="entry name" value="ATP_synth_gamma_bact"/>
    <property type="match status" value="1"/>
</dbReference>
<dbReference type="InterPro" id="IPR035968">
    <property type="entry name" value="ATP_synth_F1_ATPase_gsu"/>
</dbReference>
<dbReference type="InterPro" id="IPR000131">
    <property type="entry name" value="ATP_synth_F1_gsu"/>
</dbReference>
<dbReference type="NCBIfam" id="TIGR01146">
    <property type="entry name" value="ATPsyn_F1gamma"/>
    <property type="match status" value="1"/>
</dbReference>
<dbReference type="PANTHER" id="PTHR11693">
    <property type="entry name" value="ATP SYNTHASE GAMMA CHAIN"/>
    <property type="match status" value="1"/>
</dbReference>
<dbReference type="PANTHER" id="PTHR11693:SF22">
    <property type="entry name" value="ATP SYNTHASE SUBUNIT GAMMA, MITOCHONDRIAL"/>
    <property type="match status" value="1"/>
</dbReference>
<dbReference type="Pfam" id="PF00231">
    <property type="entry name" value="ATP-synt"/>
    <property type="match status" value="1"/>
</dbReference>
<dbReference type="PRINTS" id="PR00126">
    <property type="entry name" value="ATPASEGAMMA"/>
</dbReference>
<dbReference type="SUPFAM" id="SSF52943">
    <property type="entry name" value="ATP synthase (F1-ATPase), gamma subunit"/>
    <property type="match status" value="1"/>
</dbReference>
<reference key="1">
    <citation type="journal article" date="2003" name="Proc. Natl. Acad. Sci. U.S.A.">
        <title>Complete genome sequence of the marine planctomycete Pirellula sp. strain 1.</title>
        <authorList>
            <person name="Gloeckner F.O."/>
            <person name="Kube M."/>
            <person name="Bauer M."/>
            <person name="Teeling H."/>
            <person name="Lombardot T."/>
            <person name="Ludwig W."/>
            <person name="Gade D."/>
            <person name="Beck A."/>
            <person name="Borzym K."/>
            <person name="Heitmann K."/>
            <person name="Rabus R."/>
            <person name="Schlesner H."/>
            <person name="Amann R."/>
            <person name="Reinhardt R."/>
        </authorList>
    </citation>
    <scope>NUCLEOTIDE SEQUENCE [LARGE SCALE GENOMIC DNA]</scope>
    <source>
        <strain>DSM 10527 / NCIMB 13988 / SH1</strain>
    </source>
</reference>
<name>ATPG_RHOBA</name>
<sequence length="296" mass="32680">MANARALDKRRKSIRNIRKITRTMELIATARYKKAMDRAAAATAYTEQITKIVSRLADAGLDVQHPLLEQREKINTTRVLVLASNRGLCGGYNASILRTALPRIKSLRESIPNVIVDASGKRGVNGLKFRGIETEQRFLQFEDQPAYDDVEKIAEGYLAEYITGKIDRLDVVYTKFISTSKQEAVIETLLPLGSLGDESDSASDGSDDTNAEYEFLPSAESILEEVVPTSFKVKLFKCFLDAAVSEQVARMIAMKGATESAGDMIKQLSMTYNRARQSQITGEIMEIIGGVEALEG</sequence>
<feature type="chain" id="PRO_0000073357" description="ATP synthase gamma chain">
    <location>
        <begin position="1"/>
        <end position="296"/>
    </location>
</feature>
<keyword id="KW-0066">ATP synthesis</keyword>
<keyword id="KW-0997">Cell inner membrane</keyword>
<keyword id="KW-1003">Cell membrane</keyword>
<keyword id="KW-0139">CF(1)</keyword>
<keyword id="KW-0375">Hydrogen ion transport</keyword>
<keyword id="KW-0406">Ion transport</keyword>
<keyword id="KW-0472">Membrane</keyword>
<keyword id="KW-1185">Reference proteome</keyword>
<keyword id="KW-0813">Transport</keyword>
<organism>
    <name type="scientific">Rhodopirellula baltica (strain DSM 10527 / NCIMB 13988 / SH1)</name>
    <dbReference type="NCBI Taxonomy" id="243090"/>
    <lineage>
        <taxon>Bacteria</taxon>
        <taxon>Pseudomonadati</taxon>
        <taxon>Planctomycetota</taxon>
        <taxon>Planctomycetia</taxon>
        <taxon>Pirellulales</taxon>
        <taxon>Pirellulaceae</taxon>
        <taxon>Rhodopirellula</taxon>
    </lineage>
</organism>
<proteinExistence type="inferred from homology"/>
<protein>
    <recommendedName>
        <fullName evidence="1">ATP synthase gamma chain</fullName>
    </recommendedName>
    <alternativeName>
        <fullName evidence="1">ATP synthase F1 sector gamma subunit</fullName>
    </alternativeName>
    <alternativeName>
        <fullName evidence="1">F-ATPase gamma subunit</fullName>
    </alternativeName>
</protein>
<evidence type="ECO:0000255" key="1">
    <source>
        <dbReference type="HAMAP-Rule" id="MF_00815"/>
    </source>
</evidence>